<proteinExistence type="inferred from homology"/>
<protein>
    <recommendedName>
        <fullName evidence="1">Bifunctional purine biosynthesis protein PurH</fullName>
    </recommendedName>
    <domain>
        <recommendedName>
            <fullName evidence="1">Phosphoribosylaminoimidazolecarboxamide formyltransferase</fullName>
            <ecNumber evidence="1">2.1.2.3</ecNumber>
        </recommendedName>
        <alternativeName>
            <fullName evidence="1">AICAR transformylase</fullName>
        </alternativeName>
    </domain>
    <domain>
        <recommendedName>
            <fullName evidence="1">IMP cyclohydrolase</fullName>
            <ecNumber evidence="1">3.5.4.10</ecNumber>
        </recommendedName>
        <alternativeName>
            <fullName evidence="1">ATIC</fullName>
        </alternativeName>
        <alternativeName>
            <fullName evidence="1">IMP synthase</fullName>
        </alternativeName>
        <alternativeName>
            <fullName evidence="1">Inosinicase</fullName>
        </alternativeName>
    </domain>
</protein>
<dbReference type="EC" id="2.1.2.3" evidence="1"/>
<dbReference type="EC" id="3.5.4.10" evidence="1"/>
<dbReference type="EMBL" id="CP001215">
    <property type="protein sequence ID" value="ACP15650.1"/>
    <property type="molecule type" value="Genomic_DNA"/>
</dbReference>
<dbReference type="RefSeq" id="WP_000745427.1">
    <property type="nucleotide sequence ID" value="NC_012581.1"/>
</dbReference>
<dbReference type="SMR" id="C3L536"/>
<dbReference type="GeneID" id="45020357"/>
<dbReference type="KEGG" id="bah:BAMEG_0356"/>
<dbReference type="HOGENOM" id="CLU_016316_5_2_9"/>
<dbReference type="UniPathway" id="UPA00074">
    <property type="reaction ID" value="UER00133"/>
</dbReference>
<dbReference type="UniPathway" id="UPA00074">
    <property type="reaction ID" value="UER00135"/>
</dbReference>
<dbReference type="GO" id="GO:0005829">
    <property type="term" value="C:cytosol"/>
    <property type="evidence" value="ECO:0007669"/>
    <property type="project" value="TreeGrafter"/>
</dbReference>
<dbReference type="GO" id="GO:0003937">
    <property type="term" value="F:IMP cyclohydrolase activity"/>
    <property type="evidence" value="ECO:0007669"/>
    <property type="project" value="UniProtKB-UniRule"/>
</dbReference>
<dbReference type="GO" id="GO:0004643">
    <property type="term" value="F:phosphoribosylaminoimidazolecarboxamide formyltransferase activity"/>
    <property type="evidence" value="ECO:0007669"/>
    <property type="project" value="UniProtKB-UniRule"/>
</dbReference>
<dbReference type="GO" id="GO:0006189">
    <property type="term" value="P:'de novo' IMP biosynthetic process"/>
    <property type="evidence" value="ECO:0007669"/>
    <property type="project" value="UniProtKB-UniRule"/>
</dbReference>
<dbReference type="CDD" id="cd01421">
    <property type="entry name" value="IMPCH"/>
    <property type="match status" value="1"/>
</dbReference>
<dbReference type="FunFam" id="3.40.140.20:FF:000001">
    <property type="entry name" value="Bifunctional purine biosynthesis protein PurH"/>
    <property type="match status" value="1"/>
</dbReference>
<dbReference type="FunFam" id="3.40.140.20:FF:000002">
    <property type="entry name" value="Bifunctional purine biosynthesis protein PurH"/>
    <property type="match status" value="1"/>
</dbReference>
<dbReference type="FunFam" id="3.40.50.1380:FF:000001">
    <property type="entry name" value="Bifunctional purine biosynthesis protein PurH"/>
    <property type="match status" value="1"/>
</dbReference>
<dbReference type="Gene3D" id="3.40.140.20">
    <property type="match status" value="2"/>
</dbReference>
<dbReference type="Gene3D" id="3.40.50.1380">
    <property type="entry name" value="Methylglyoxal synthase-like domain"/>
    <property type="match status" value="1"/>
</dbReference>
<dbReference type="HAMAP" id="MF_00139">
    <property type="entry name" value="PurH"/>
    <property type="match status" value="1"/>
</dbReference>
<dbReference type="InterPro" id="IPR024051">
    <property type="entry name" value="AICAR_Tfase_dup_dom_sf"/>
</dbReference>
<dbReference type="InterPro" id="IPR016193">
    <property type="entry name" value="Cytidine_deaminase-like"/>
</dbReference>
<dbReference type="InterPro" id="IPR011607">
    <property type="entry name" value="MGS-like_dom"/>
</dbReference>
<dbReference type="InterPro" id="IPR036914">
    <property type="entry name" value="MGS-like_dom_sf"/>
</dbReference>
<dbReference type="InterPro" id="IPR002695">
    <property type="entry name" value="PurH-like"/>
</dbReference>
<dbReference type="NCBIfam" id="NF002049">
    <property type="entry name" value="PRK00881.1"/>
    <property type="match status" value="1"/>
</dbReference>
<dbReference type="NCBIfam" id="TIGR00355">
    <property type="entry name" value="purH"/>
    <property type="match status" value="1"/>
</dbReference>
<dbReference type="PANTHER" id="PTHR11692:SF0">
    <property type="entry name" value="BIFUNCTIONAL PURINE BIOSYNTHESIS PROTEIN ATIC"/>
    <property type="match status" value="1"/>
</dbReference>
<dbReference type="PANTHER" id="PTHR11692">
    <property type="entry name" value="BIFUNCTIONAL PURINE BIOSYNTHESIS PROTEIN PURH"/>
    <property type="match status" value="1"/>
</dbReference>
<dbReference type="Pfam" id="PF01808">
    <property type="entry name" value="AICARFT_IMPCHas"/>
    <property type="match status" value="1"/>
</dbReference>
<dbReference type="Pfam" id="PF02142">
    <property type="entry name" value="MGS"/>
    <property type="match status" value="1"/>
</dbReference>
<dbReference type="PIRSF" id="PIRSF000414">
    <property type="entry name" value="AICARFT_IMPCHas"/>
    <property type="match status" value="1"/>
</dbReference>
<dbReference type="SMART" id="SM00798">
    <property type="entry name" value="AICARFT_IMPCHas"/>
    <property type="match status" value="1"/>
</dbReference>
<dbReference type="SMART" id="SM00851">
    <property type="entry name" value="MGS"/>
    <property type="match status" value="1"/>
</dbReference>
<dbReference type="SUPFAM" id="SSF53927">
    <property type="entry name" value="Cytidine deaminase-like"/>
    <property type="match status" value="1"/>
</dbReference>
<dbReference type="SUPFAM" id="SSF52335">
    <property type="entry name" value="Methylglyoxal synthase-like"/>
    <property type="match status" value="1"/>
</dbReference>
<dbReference type="PROSITE" id="PS51855">
    <property type="entry name" value="MGS"/>
    <property type="match status" value="1"/>
</dbReference>
<feature type="chain" id="PRO_1000122945" description="Bifunctional purine biosynthesis protein PurH">
    <location>
        <begin position="1"/>
        <end position="511"/>
    </location>
</feature>
<feature type="domain" description="MGS-like" evidence="2">
    <location>
        <begin position="1"/>
        <end position="145"/>
    </location>
</feature>
<sequence length="511" mass="55516">MKKRALVSVSDKTGVVEFVKGLLEQGIEVISTGGTKKLLEENGLQVIGISEVTGFPEIMDGRVKTLHPNIHGGLLAVRDNETHVAQMNELGMEPIDFVVVNLYPFKETIAKPDVTFADAIENIDIGGPTMIRSAAKNHKFVSVIVDPVDYDVVLAELKENGEVAEETKRKLAAKVFRHTAAYDALISNYLTEQMGEESPETLTVTFEKKQDLRYGENPHQKATFYKAPFAATSSVAYAEQLHGKELSYNNINDADAALSIVKEFTEPAVVAVKHMNPCGVGVGTDIHEAYTRAYEADPVSIFGGIIAANREIDKATAEKLHEIFLEIIIAPSFSKEALEVLQSKKNLRLLTVNIEKATSASKKLTSVQGGLLVQEEDTLSLDESTISIPTKREPSEQEWKDLKLAWKVVKHVKSNAIVLAKDDMTIGVGAGQMNRVGSAKIAITQAGEKAQGSALASDAFFPMPDTVEEAAKAGITAIIQPGGSIRDEDSIKVADTYGIAMVFTGVRHFKH</sequence>
<organism>
    <name type="scientific">Bacillus anthracis (strain CDC 684 / NRRL 3495)</name>
    <dbReference type="NCBI Taxonomy" id="568206"/>
    <lineage>
        <taxon>Bacteria</taxon>
        <taxon>Bacillati</taxon>
        <taxon>Bacillota</taxon>
        <taxon>Bacilli</taxon>
        <taxon>Bacillales</taxon>
        <taxon>Bacillaceae</taxon>
        <taxon>Bacillus</taxon>
        <taxon>Bacillus cereus group</taxon>
    </lineage>
</organism>
<evidence type="ECO:0000255" key="1">
    <source>
        <dbReference type="HAMAP-Rule" id="MF_00139"/>
    </source>
</evidence>
<evidence type="ECO:0000255" key="2">
    <source>
        <dbReference type="PROSITE-ProRule" id="PRU01202"/>
    </source>
</evidence>
<reference key="1">
    <citation type="submission" date="2008-10" db="EMBL/GenBank/DDBJ databases">
        <title>Genome sequence of Bacillus anthracis str. CDC 684.</title>
        <authorList>
            <person name="Dodson R.J."/>
            <person name="Munk A.C."/>
            <person name="Brettin T."/>
            <person name="Bruce D."/>
            <person name="Detter C."/>
            <person name="Tapia R."/>
            <person name="Han C."/>
            <person name="Sutton G."/>
            <person name="Sims D."/>
        </authorList>
    </citation>
    <scope>NUCLEOTIDE SEQUENCE [LARGE SCALE GENOMIC DNA]</scope>
    <source>
        <strain>CDC 684 / NRRL 3495</strain>
    </source>
</reference>
<comment type="catalytic activity">
    <reaction evidence="1">
        <text>(6R)-10-formyltetrahydrofolate + 5-amino-1-(5-phospho-beta-D-ribosyl)imidazole-4-carboxamide = 5-formamido-1-(5-phospho-D-ribosyl)imidazole-4-carboxamide + (6S)-5,6,7,8-tetrahydrofolate</text>
        <dbReference type="Rhea" id="RHEA:22192"/>
        <dbReference type="ChEBI" id="CHEBI:57453"/>
        <dbReference type="ChEBI" id="CHEBI:58467"/>
        <dbReference type="ChEBI" id="CHEBI:58475"/>
        <dbReference type="ChEBI" id="CHEBI:195366"/>
        <dbReference type="EC" id="2.1.2.3"/>
    </reaction>
</comment>
<comment type="catalytic activity">
    <reaction evidence="1">
        <text>IMP + H2O = 5-formamido-1-(5-phospho-D-ribosyl)imidazole-4-carboxamide</text>
        <dbReference type="Rhea" id="RHEA:18445"/>
        <dbReference type="ChEBI" id="CHEBI:15377"/>
        <dbReference type="ChEBI" id="CHEBI:58053"/>
        <dbReference type="ChEBI" id="CHEBI:58467"/>
        <dbReference type="EC" id="3.5.4.10"/>
    </reaction>
</comment>
<comment type="pathway">
    <text evidence="1">Purine metabolism; IMP biosynthesis via de novo pathway; 5-formamido-1-(5-phospho-D-ribosyl)imidazole-4-carboxamide from 5-amino-1-(5-phospho-D-ribosyl)imidazole-4-carboxamide (10-formyl THF route): step 1/1.</text>
</comment>
<comment type="pathway">
    <text evidence="1">Purine metabolism; IMP biosynthesis via de novo pathway; IMP from 5-formamido-1-(5-phospho-D-ribosyl)imidazole-4-carboxamide: step 1/1.</text>
</comment>
<comment type="domain">
    <text evidence="1">The IMP cyclohydrolase activity resides in the N-terminal region.</text>
</comment>
<comment type="similarity">
    <text evidence="1">Belongs to the PurH family.</text>
</comment>
<gene>
    <name evidence="1" type="primary">purH</name>
    <name type="ordered locus">BAMEG_0356</name>
</gene>
<accession>C3L536</accession>
<name>PUR9_BACAC</name>
<keyword id="KW-0378">Hydrolase</keyword>
<keyword id="KW-0511">Multifunctional enzyme</keyword>
<keyword id="KW-0658">Purine biosynthesis</keyword>
<keyword id="KW-0808">Transferase</keyword>